<accession>P54542</accession>
<name>YQJE_BACSU</name>
<proteinExistence type="inferred from homology"/>
<evidence type="ECO:0000250" key="1"/>
<evidence type="ECO:0000305" key="2"/>
<dbReference type="EMBL" id="D84432">
    <property type="protein sequence ID" value="BAA12611.1"/>
    <property type="molecule type" value="Genomic_DNA"/>
</dbReference>
<dbReference type="EMBL" id="AL009126">
    <property type="protein sequence ID" value="CAB14322.2"/>
    <property type="molecule type" value="Genomic_DNA"/>
</dbReference>
<dbReference type="PIR" id="E69963">
    <property type="entry name" value="E69963"/>
</dbReference>
<dbReference type="RefSeq" id="NP_390271.2">
    <property type="nucleotide sequence ID" value="NC_000964.3"/>
</dbReference>
<dbReference type="RefSeq" id="WP_003230352.1">
    <property type="nucleotide sequence ID" value="NZ_OZ025638.1"/>
</dbReference>
<dbReference type="SMR" id="P54542"/>
<dbReference type="FunCoup" id="P54542">
    <property type="interactions" value="17"/>
</dbReference>
<dbReference type="STRING" id="224308.BSU23910"/>
<dbReference type="MEROPS" id="M20.A23"/>
<dbReference type="jPOST" id="P54542"/>
<dbReference type="PaxDb" id="224308-BSU23910"/>
<dbReference type="EnsemblBacteria" id="CAB14322">
    <property type="protein sequence ID" value="CAB14322"/>
    <property type="gene ID" value="BSU_23910"/>
</dbReference>
<dbReference type="GeneID" id="938687"/>
<dbReference type="KEGG" id="bsu:BSU23910"/>
<dbReference type="PATRIC" id="fig|224308.179.peg.2604"/>
<dbReference type="eggNOG" id="COG2195">
    <property type="taxonomic scope" value="Bacteria"/>
</dbReference>
<dbReference type="InParanoid" id="P54542"/>
<dbReference type="OrthoDB" id="9776600at2"/>
<dbReference type="PhylomeDB" id="P54542"/>
<dbReference type="BioCyc" id="BSUB:BSU23910-MONOMER"/>
<dbReference type="Proteomes" id="UP000001570">
    <property type="component" value="Chromosome"/>
</dbReference>
<dbReference type="GO" id="GO:0046872">
    <property type="term" value="F:metal ion binding"/>
    <property type="evidence" value="ECO:0007669"/>
    <property type="project" value="UniProtKB-KW"/>
</dbReference>
<dbReference type="GO" id="GO:0008237">
    <property type="term" value="F:metallopeptidase activity"/>
    <property type="evidence" value="ECO:0007669"/>
    <property type="project" value="UniProtKB-KW"/>
</dbReference>
<dbReference type="GO" id="GO:0006508">
    <property type="term" value="P:proteolysis"/>
    <property type="evidence" value="ECO:0007669"/>
    <property type="project" value="UniProtKB-KW"/>
</dbReference>
<dbReference type="FunFam" id="3.30.70.360:FF:000007">
    <property type="entry name" value="Peptidase, M20/M25/M40 family"/>
    <property type="match status" value="1"/>
</dbReference>
<dbReference type="Gene3D" id="3.30.70.360">
    <property type="match status" value="1"/>
</dbReference>
<dbReference type="Gene3D" id="3.40.630.10">
    <property type="entry name" value="Zn peptidases"/>
    <property type="match status" value="1"/>
</dbReference>
<dbReference type="InterPro" id="IPR001261">
    <property type="entry name" value="ArgE/DapE_CS"/>
</dbReference>
<dbReference type="InterPro" id="IPR036264">
    <property type="entry name" value="Bact_exopeptidase_dim_dom"/>
</dbReference>
<dbReference type="InterPro" id="IPR010162">
    <property type="entry name" value="PepT-like"/>
</dbReference>
<dbReference type="InterPro" id="IPR002933">
    <property type="entry name" value="Peptidase_M20"/>
</dbReference>
<dbReference type="InterPro" id="IPR011650">
    <property type="entry name" value="Peptidase_M20_dimer"/>
</dbReference>
<dbReference type="InterPro" id="IPR008007">
    <property type="entry name" value="Peptidase_M42"/>
</dbReference>
<dbReference type="NCBIfam" id="TIGR01883">
    <property type="entry name" value="PepT-like"/>
    <property type="match status" value="1"/>
</dbReference>
<dbReference type="PANTHER" id="PTHR42994:SF2">
    <property type="entry name" value="PEPTIDASE"/>
    <property type="match status" value="1"/>
</dbReference>
<dbReference type="PANTHER" id="PTHR42994">
    <property type="entry name" value="PEPTIDASE T"/>
    <property type="match status" value="1"/>
</dbReference>
<dbReference type="Pfam" id="PF07687">
    <property type="entry name" value="M20_dimer"/>
    <property type="match status" value="1"/>
</dbReference>
<dbReference type="Pfam" id="PF01546">
    <property type="entry name" value="Peptidase_M20"/>
    <property type="match status" value="1"/>
</dbReference>
<dbReference type="PIRSF" id="PIRSF001123">
    <property type="entry name" value="PepA_GA"/>
    <property type="match status" value="1"/>
</dbReference>
<dbReference type="SUPFAM" id="SSF55031">
    <property type="entry name" value="Bacterial exopeptidase dimerisation domain"/>
    <property type="match status" value="1"/>
</dbReference>
<dbReference type="SUPFAM" id="SSF53187">
    <property type="entry name" value="Zn-dependent exopeptidases"/>
    <property type="match status" value="1"/>
</dbReference>
<dbReference type="PROSITE" id="PS00758">
    <property type="entry name" value="ARGE_DAPE_CPG2_1"/>
    <property type="match status" value="1"/>
</dbReference>
<dbReference type="PROSITE" id="PS00759">
    <property type="entry name" value="ARGE_DAPE_CPG2_2"/>
    <property type="match status" value="1"/>
</dbReference>
<organism>
    <name type="scientific">Bacillus subtilis (strain 168)</name>
    <dbReference type="NCBI Taxonomy" id="224308"/>
    <lineage>
        <taxon>Bacteria</taxon>
        <taxon>Bacillati</taxon>
        <taxon>Bacillota</taxon>
        <taxon>Bacilli</taxon>
        <taxon>Bacillales</taxon>
        <taxon>Bacillaceae</taxon>
        <taxon>Bacillus</taxon>
    </lineage>
</organism>
<sequence length="371" mass="39647">MVNEKRLLEEFLELVQIDSETKHEAEICKVLKRKFSDLGVDVKEDDTMDITGHGAGNLICTLKGTKQTDTIYFTSHMDTVVPGNGVKPVVENGYVKTDGTTILGADDKAGLAAMFEAIKVLKEENIEHGTIEFIITVGEESGLIGAKALDRSMITASYGYALDSDGKVGNIIVAAPTQAKVRAAIFGKTAHAGVEPEKGISAITIASKAISKMPLGRIDEETTANIGRFEGGTQTNIVCDEVHILAEARSLVPEKMEAQVQKMKAAFEEAAADMGGRAEVEIEVMYPGFKYQDGDQVVEIAKKAAAKIGRPSELQTSGGGSDANVIAGHGIPTVNLAVGYEQIHTKNEKMPIEELVKTAEMVVAIIEEAAK</sequence>
<reference key="1">
    <citation type="journal article" date="1996" name="Microbiology">
        <title>Systematic sequencing of the 283 kb 210 degrees-232 degrees region of the Bacillus subtilis genome containing the skin element and many sporulation genes.</title>
        <authorList>
            <person name="Mizuno M."/>
            <person name="Masuda S."/>
            <person name="Takemaru K."/>
            <person name="Hosono S."/>
            <person name="Sato T."/>
            <person name="Takeuchi M."/>
            <person name="Kobayashi Y."/>
        </authorList>
    </citation>
    <scope>NUCLEOTIDE SEQUENCE [GENOMIC DNA]</scope>
    <source>
        <strain>168 / JH642</strain>
    </source>
</reference>
<reference key="2">
    <citation type="journal article" date="1997" name="Nature">
        <title>The complete genome sequence of the Gram-positive bacterium Bacillus subtilis.</title>
        <authorList>
            <person name="Kunst F."/>
            <person name="Ogasawara N."/>
            <person name="Moszer I."/>
            <person name="Albertini A.M."/>
            <person name="Alloni G."/>
            <person name="Azevedo V."/>
            <person name="Bertero M.G."/>
            <person name="Bessieres P."/>
            <person name="Bolotin A."/>
            <person name="Borchert S."/>
            <person name="Borriss R."/>
            <person name="Boursier L."/>
            <person name="Brans A."/>
            <person name="Braun M."/>
            <person name="Brignell S.C."/>
            <person name="Bron S."/>
            <person name="Brouillet S."/>
            <person name="Bruschi C.V."/>
            <person name="Caldwell B."/>
            <person name="Capuano V."/>
            <person name="Carter N.M."/>
            <person name="Choi S.-K."/>
            <person name="Codani J.-J."/>
            <person name="Connerton I.F."/>
            <person name="Cummings N.J."/>
            <person name="Daniel R.A."/>
            <person name="Denizot F."/>
            <person name="Devine K.M."/>
            <person name="Duesterhoeft A."/>
            <person name="Ehrlich S.D."/>
            <person name="Emmerson P.T."/>
            <person name="Entian K.-D."/>
            <person name="Errington J."/>
            <person name="Fabret C."/>
            <person name="Ferrari E."/>
            <person name="Foulger D."/>
            <person name="Fritz C."/>
            <person name="Fujita M."/>
            <person name="Fujita Y."/>
            <person name="Fuma S."/>
            <person name="Galizzi A."/>
            <person name="Galleron N."/>
            <person name="Ghim S.-Y."/>
            <person name="Glaser P."/>
            <person name="Goffeau A."/>
            <person name="Golightly E.J."/>
            <person name="Grandi G."/>
            <person name="Guiseppi G."/>
            <person name="Guy B.J."/>
            <person name="Haga K."/>
            <person name="Haiech J."/>
            <person name="Harwood C.R."/>
            <person name="Henaut A."/>
            <person name="Hilbert H."/>
            <person name="Holsappel S."/>
            <person name="Hosono S."/>
            <person name="Hullo M.-F."/>
            <person name="Itaya M."/>
            <person name="Jones L.-M."/>
            <person name="Joris B."/>
            <person name="Karamata D."/>
            <person name="Kasahara Y."/>
            <person name="Klaerr-Blanchard M."/>
            <person name="Klein C."/>
            <person name="Kobayashi Y."/>
            <person name="Koetter P."/>
            <person name="Koningstein G."/>
            <person name="Krogh S."/>
            <person name="Kumano M."/>
            <person name="Kurita K."/>
            <person name="Lapidus A."/>
            <person name="Lardinois S."/>
            <person name="Lauber J."/>
            <person name="Lazarevic V."/>
            <person name="Lee S.-M."/>
            <person name="Levine A."/>
            <person name="Liu H."/>
            <person name="Masuda S."/>
            <person name="Mauel C."/>
            <person name="Medigue C."/>
            <person name="Medina N."/>
            <person name="Mellado R.P."/>
            <person name="Mizuno M."/>
            <person name="Moestl D."/>
            <person name="Nakai S."/>
            <person name="Noback M."/>
            <person name="Noone D."/>
            <person name="O'Reilly M."/>
            <person name="Ogawa K."/>
            <person name="Ogiwara A."/>
            <person name="Oudega B."/>
            <person name="Park S.-H."/>
            <person name="Parro V."/>
            <person name="Pohl T.M."/>
            <person name="Portetelle D."/>
            <person name="Porwollik S."/>
            <person name="Prescott A.M."/>
            <person name="Presecan E."/>
            <person name="Pujic P."/>
            <person name="Purnelle B."/>
            <person name="Rapoport G."/>
            <person name="Rey M."/>
            <person name="Reynolds S."/>
            <person name="Rieger M."/>
            <person name="Rivolta C."/>
            <person name="Rocha E."/>
            <person name="Roche B."/>
            <person name="Rose M."/>
            <person name="Sadaie Y."/>
            <person name="Sato T."/>
            <person name="Scanlan E."/>
            <person name="Schleich S."/>
            <person name="Schroeter R."/>
            <person name="Scoffone F."/>
            <person name="Sekiguchi J."/>
            <person name="Sekowska A."/>
            <person name="Seror S.J."/>
            <person name="Serror P."/>
            <person name="Shin B.-S."/>
            <person name="Soldo B."/>
            <person name="Sorokin A."/>
            <person name="Tacconi E."/>
            <person name="Takagi T."/>
            <person name="Takahashi H."/>
            <person name="Takemaru K."/>
            <person name="Takeuchi M."/>
            <person name="Tamakoshi A."/>
            <person name="Tanaka T."/>
            <person name="Terpstra P."/>
            <person name="Tognoni A."/>
            <person name="Tosato V."/>
            <person name="Uchiyama S."/>
            <person name="Vandenbol M."/>
            <person name="Vannier F."/>
            <person name="Vassarotti A."/>
            <person name="Viari A."/>
            <person name="Wambutt R."/>
            <person name="Wedler E."/>
            <person name="Wedler H."/>
            <person name="Weitzenegger T."/>
            <person name="Winters P."/>
            <person name="Wipat A."/>
            <person name="Yamamoto H."/>
            <person name="Yamane K."/>
            <person name="Yasumoto K."/>
            <person name="Yata K."/>
            <person name="Yoshida K."/>
            <person name="Yoshikawa H.-F."/>
            <person name="Zumstein E."/>
            <person name="Yoshikawa H."/>
            <person name="Danchin A."/>
        </authorList>
    </citation>
    <scope>NUCLEOTIDE SEQUENCE [LARGE SCALE GENOMIC DNA]</scope>
    <source>
        <strain>168</strain>
    </source>
</reference>
<reference key="3">
    <citation type="journal article" date="2009" name="Microbiology">
        <title>From a consortium sequence to a unified sequence: the Bacillus subtilis 168 reference genome a decade later.</title>
        <authorList>
            <person name="Barbe V."/>
            <person name="Cruveiller S."/>
            <person name="Kunst F."/>
            <person name="Lenoble P."/>
            <person name="Meurice G."/>
            <person name="Sekowska A."/>
            <person name="Vallenet D."/>
            <person name="Wang T."/>
            <person name="Moszer I."/>
            <person name="Medigue C."/>
            <person name="Danchin A."/>
        </authorList>
    </citation>
    <scope>SEQUENCE REVISION TO 152</scope>
</reference>
<protein>
    <recommendedName>
        <fullName>Uncharacterized protein YqjE</fullName>
    </recommendedName>
</protein>
<gene>
    <name type="primary">yqjE</name>
    <name type="ordered locus">BSU23910</name>
</gene>
<comment type="function">
    <text>Could be a peptidase.</text>
</comment>
<comment type="cofactor">
    <cofactor evidence="1">
        <name>Zn(2+)</name>
        <dbReference type="ChEBI" id="CHEBI:29105"/>
    </cofactor>
    <text evidence="1">Binds 2 Zn(2+) ions per subunit.</text>
</comment>
<comment type="similarity">
    <text evidence="2">Belongs to the peptidase M20A family.</text>
</comment>
<feature type="chain" id="PRO_0000185338" description="Uncharacterized protein YqjE">
    <location>
        <begin position="1"/>
        <end position="371"/>
    </location>
</feature>
<feature type="active site" evidence="1">
    <location>
        <position position="78"/>
    </location>
</feature>
<feature type="active site" description="Proton acceptor" evidence="1">
    <location>
        <position position="139"/>
    </location>
</feature>
<feature type="binding site" evidence="1">
    <location>
        <position position="76"/>
    </location>
    <ligand>
        <name>Zn(2+)</name>
        <dbReference type="ChEBI" id="CHEBI:29105"/>
        <label>1</label>
    </ligand>
</feature>
<feature type="binding site" evidence="1">
    <location>
        <position position="106"/>
    </location>
    <ligand>
        <name>Zn(2+)</name>
        <dbReference type="ChEBI" id="CHEBI:29105"/>
        <label>1</label>
    </ligand>
</feature>
<feature type="binding site" evidence="1">
    <location>
        <position position="106"/>
    </location>
    <ligand>
        <name>Zn(2+)</name>
        <dbReference type="ChEBI" id="CHEBI:29105"/>
        <label>2</label>
    </ligand>
</feature>
<feature type="binding site" evidence="1">
    <location>
        <position position="140"/>
    </location>
    <ligand>
        <name>Zn(2+)</name>
        <dbReference type="ChEBI" id="CHEBI:29105"/>
        <label>2</label>
    </ligand>
</feature>
<feature type="binding site" evidence="1">
    <location>
        <position position="163"/>
    </location>
    <ligand>
        <name>Zn(2+)</name>
        <dbReference type="ChEBI" id="CHEBI:29105"/>
        <label>1</label>
    </ligand>
</feature>
<feature type="binding site" evidence="1">
    <location>
        <position position="344"/>
    </location>
    <ligand>
        <name>Zn(2+)</name>
        <dbReference type="ChEBI" id="CHEBI:29105"/>
        <label>2</label>
    </ligand>
</feature>
<feature type="sequence conflict" description="In Ref. 1; BAA12611." evidence="2" ref="1">
    <original>S</original>
    <variation>P</variation>
    <location>
        <position position="152"/>
    </location>
</feature>
<keyword id="KW-0378">Hydrolase</keyword>
<keyword id="KW-0479">Metal-binding</keyword>
<keyword id="KW-0482">Metalloprotease</keyword>
<keyword id="KW-0645">Protease</keyword>
<keyword id="KW-1185">Reference proteome</keyword>
<keyword id="KW-0862">Zinc</keyword>